<feature type="chain" id="PRO_0000191887" description="Transketolase 2">
    <location>
        <begin position="1"/>
        <end position="663"/>
    </location>
</feature>
<feature type="active site" description="Proton donor" evidence="1">
    <location>
        <position position="410"/>
    </location>
</feature>
<feature type="binding site" evidence="1">
    <location>
        <position position="25"/>
    </location>
    <ligand>
        <name>substrate</name>
    </ligand>
</feature>
<feature type="binding site" evidence="1">
    <location>
        <position position="65"/>
    </location>
    <ligand>
        <name>thiamine diphosphate</name>
        <dbReference type="ChEBI" id="CHEBI:58937"/>
    </ligand>
</feature>
<feature type="binding site" evidence="1">
    <location>
        <begin position="113"/>
        <end position="115"/>
    </location>
    <ligand>
        <name>thiamine diphosphate</name>
        <dbReference type="ChEBI" id="CHEBI:58937"/>
    </ligand>
</feature>
<feature type="binding site" evidence="1">
    <location>
        <position position="154"/>
    </location>
    <ligand>
        <name>Mg(2+)</name>
        <dbReference type="ChEBI" id="CHEBI:18420"/>
    </ligand>
</feature>
<feature type="binding site" evidence="1">
    <location>
        <position position="155"/>
    </location>
    <ligand>
        <name>thiamine diphosphate</name>
        <dbReference type="ChEBI" id="CHEBI:58937"/>
    </ligand>
</feature>
<feature type="binding site" evidence="1">
    <location>
        <position position="184"/>
    </location>
    <ligand>
        <name>Mg(2+)</name>
        <dbReference type="ChEBI" id="CHEBI:18420"/>
    </ligand>
</feature>
<feature type="binding site" evidence="1">
    <location>
        <position position="184"/>
    </location>
    <ligand>
        <name>thiamine diphosphate</name>
        <dbReference type="ChEBI" id="CHEBI:58937"/>
    </ligand>
</feature>
<feature type="binding site" evidence="1">
    <location>
        <position position="186"/>
    </location>
    <ligand>
        <name>Mg(2+)</name>
        <dbReference type="ChEBI" id="CHEBI:18420"/>
    </ligand>
</feature>
<feature type="binding site" evidence="1">
    <location>
        <position position="259"/>
    </location>
    <ligand>
        <name>substrate</name>
    </ligand>
</feature>
<feature type="binding site" evidence="1">
    <location>
        <position position="259"/>
    </location>
    <ligand>
        <name>thiamine diphosphate</name>
        <dbReference type="ChEBI" id="CHEBI:58937"/>
    </ligand>
</feature>
<feature type="binding site" evidence="1">
    <location>
        <position position="356"/>
    </location>
    <ligand>
        <name>substrate</name>
    </ligand>
</feature>
<feature type="binding site" evidence="1">
    <location>
        <position position="383"/>
    </location>
    <ligand>
        <name>substrate</name>
    </ligand>
</feature>
<feature type="binding site" evidence="1">
    <location>
        <position position="436"/>
    </location>
    <ligand>
        <name>thiamine diphosphate</name>
        <dbReference type="ChEBI" id="CHEBI:58937"/>
    </ligand>
</feature>
<feature type="binding site" evidence="1">
    <location>
        <position position="460"/>
    </location>
    <ligand>
        <name>substrate</name>
    </ligand>
</feature>
<feature type="binding site" evidence="1">
    <location>
        <position position="468"/>
    </location>
    <ligand>
        <name>substrate</name>
    </ligand>
</feature>
<feature type="binding site" evidence="1">
    <location>
        <position position="519"/>
    </location>
    <ligand>
        <name>substrate</name>
    </ligand>
</feature>
<feature type="site" description="Important for catalytic activity" evidence="1">
    <location>
        <position position="25"/>
    </location>
</feature>
<feature type="site" description="Important for catalytic activity" evidence="1">
    <location>
        <position position="259"/>
    </location>
</feature>
<keyword id="KW-0106">Calcium</keyword>
<keyword id="KW-0460">Magnesium</keyword>
<keyword id="KW-0479">Metal-binding</keyword>
<keyword id="KW-0786">Thiamine pyrophosphate</keyword>
<keyword id="KW-0808">Transferase</keyword>
<name>TKT2_VIBVU</name>
<protein>
    <recommendedName>
        <fullName>Transketolase 2</fullName>
        <shortName>TK 2</shortName>
        <ecNumber>2.2.1.1</ecNumber>
    </recommendedName>
</protein>
<reference key="1">
    <citation type="submission" date="2002-12" db="EMBL/GenBank/DDBJ databases">
        <title>Complete genome sequence of Vibrio vulnificus CMCP6.</title>
        <authorList>
            <person name="Rhee J.H."/>
            <person name="Kim S.Y."/>
            <person name="Chung S.S."/>
            <person name="Kim J.J."/>
            <person name="Moon Y.H."/>
            <person name="Jeong H."/>
            <person name="Choy H.E."/>
        </authorList>
    </citation>
    <scope>NUCLEOTIDE SEQUENCE [LARGE SCALE GENOMIC DNA]</scope>
    <source>
        <strain>CMCP6</strain>
    </source>
</reference>
<sequence length="663" mass="71903">MDRKQLANAIRALSMDGVQKANSGHPGAPMGMADIAEVLWRGHLNHNPSNPEWADRDRFVLSNGHGSMLIYSLLHLSGYELSIDDLKNFRQLHSKTPGHPEYGYAPGIETTTGPLGQGITNAVGMAMAEKALAAQFNKEGHDIVDHFTYVFMGDGCLMEGISHEACSLAGTLGLGKLIAFWDDNGISIDGHVEGWFSDDTPKRFEAYGWHVIPAVDGHNAEAINAAIEAAKADPRPTLICTKTIIGFGSPNKSGSHDCHGAPLGAEEIAATRKELGWEHGPFEIPQEVYAEWSAKEAGAAKEAAWNEKFAAYEAAYPELAAEFKRRVNGELPAQWEEKANQIIADLQANPANIASRKASQNALEAFGKMLPEFMGGSADLAPSNLTMWSGSKSLEASDFSGNYIHYGVREFGMTAIMNGIALHGGFVPYGATFLMFMEYARNAMRMAALMKVQNIQVYTHDSIGLGEDGPTHQPVEQIASLRLTPNMSTWRPCDQVESAVAWKLAIERKDGPSALIFSRQNLAQQPRSAEQVADIAKGGYILKDSDGKPELILIATGSEVELAVKAAEQLTAEGKKVRVVSMPATDTFDKQDAAYREAVLPSDVTARIAIEAGIADFWYKYVGFDGRIIGMTTFGESAPADQLFEMFGFTVENVVNTAKELLA</sequence>
<comment type="function">
    <text evidence="1">Catalyzes the transfer of a two-carbon ketol group from a ketose donor to an aldose acceptor, via a covalent intermediate with the cofactor thiamine pyrophosphate.</text>
</comment>
<comment type="catalytic activity">
    <reaction>
        <text>D-sedoheptulose 7-phosphate + D-glyceraldehyde 3-phosphate = aldehydo-D-ribose 5-phosphate + D-xylulose 5-phosphate</text>
        <dbReference type="Rhea" id="RHEA:10508"/>
        <dbReference type="ChEBI" id="CHEBI:57483"/>
        <dbReference type="ChEBI" id="CHEBI:57737"/>
        <dbReference type="ChEBI" id="CHEBI:58273"/>
        <dbReference type="ChEBI" id="CHEBI:59776"/>
        <dbReference type="EC" id="2.2.1.1"/>
    </reaction>
</comment>
<comment type="cofactor">
    <cofactor evidence="1">
        <name>Mg(2+)</name>
        <dbReference type="ChEBI" id="CHEBI:18420"/>
    </cofactor>
    <cofactor evidence="1">
        <name>Ca(2+)</name>
        <dbReference type="ChEBI" id="CHEBI:29108"/>
    </cofactor>
    <cofactor evidence="1">
        <name>Mn(2+)</name>
        <dbReference type="ChEBI" id="CHEBI:29035"/>
    </cofactor>
    <cofactor evidence="1">
        <name>Co(2+)</name>
        <dbReference type="ChEBI" id="CHEBI:48828"/>
    </cofactor>
    <text evidence="1">Binds 1 Mg(2+) ion per subunit. Can also utilize other divalent metal cations, such as Ca(2+), Mn(2+) and Co(2+).</text>
</comment>
<comment type="cofactor">
    <cofactor evidence="1">
        <name>thiamine diphosphate</name>
        <dbReference type="ChEBI" id="CHEBI:58937"/>
    </cofactor>
    <text evidence="1">Binds 1 thiamine pyrophosphate per subunit.</text>
</comment>
<comment type="subunit">
    <text evidence="1">Homodimer.</text>
</comment>
<comment type="similarity">
    <text evidence="2">Belongs to the transketolase family.</text>
</comment>
<accession>Q8D6H8</accession>
<dbReference type="EC" id="2.2.1.1"/>
<dbReference type="EMBL" id="AE016796">
    <property type="protein sequence ID" value="AAO07501.1"/>
    <property type="molecule type" value="Genomic_DNA"/>
</dbReference>
<dbReference type="RefSeq" id="WP_011081498.1">
    <property type="nucleotide sequence ID" value="NC_004460.2"/>
</dbReference>
<dbReference type="SMR" id="Q8D6H8"/>
<dbReference type="KEGG" id="vvu:VV2_0553"/>
<dbReference type="HOGENOM" id="CLU_009227_0_1_6"/>
<dbReference type="Proteomes" id="UP000002275">
    <property type="component" value="Chromosome 2"/>
</dbReference>
<dbReference type="GO" id="GO:0005829">
    <property type="term" value="C:cytosol"/>
    <property type="evidence" value="ECO:0007669"/>
    <property type="project" value="TreeGrafter"/>
</dbReference>
<dbReference type="GO" id="GO:0046872">
    <property type="term" value="F:metal ion binding"/>
    <property type="evidence" value="ECO:0007669"/>
    <property type="project" value="UniProtKB-KW"/>
</dbReference>
<dbReference type="GO" id="GO:0004802">
    <property type="term" value="F:transketolase activity"/>
    <property type="evidence" value="ECO:0007669"/>
    <property type="project" value="UniProtKB-EC"/>
</dbReference>
<dbReference type="GO" id="GO:0006098">
    <property type="term" value="P:pentose-phosphate shunt"/>
    <property type="evidence" value="ECO:0007669"/>
    <property type="project" value="TreeGrafter"/>
</dbReference>
<dbReference type="CDD" id="cd07033">
    <property type="entry name" value="TPP_PYR_DXS_TK_like"/>
    <property type="match status" value="1"/>
</dbReference>
<dbReference type="CDD" id="cd02012">
    <property type="entry name" value="TPP_TK"/>
    <property type="match status" value="1"/>
</dbReference>
<dbReference type="FunFam" id="3.40.50.920:FF:000003">
    <property type="entry name" value="Transketolase"/>
    <property type="match status" value="1"/>
</dbReference>
<dbReference type="FunFam" id="3.40.50.970:FF:000003">
    <property type="entry name" value="Transketolase"/>
    <property type="match status" value="1"/>
</dbReference>
<dbReference type="FunFam" id="3.40.50.970:FF:000004">
    <property type="entry name" value="Transketolase"/>
    <property type="match status" value="1"/>
</dbReference>
<dbReference type="Gene3D" id="3.40.50.920">
    <property type="match status" value="1"/>
</dbReference>
<dbReference type="Gene3D" id="3.40.50.970">
    <property type="match status" value="2"/>
</dbReference>
<dbReference type="InterPro" id="IPR029061">
    <property type="entry name" value="THDP-binding"/>
</dbReference>
<dbReference type="InterPro" id="IPR009014">
    <property type="entry name" value="Transketo_C/PFOR_II"/>
</dbReference>
<dbReference type="InterPro" id="IPR055152">
    <property type="entry name" value="Transketolase-like_C_2"/>
</dbReference>
<dbReference type="InterPro" id="IPR005475">
    <property type="entry name" value="Transketolase-like_Pyr-bd"/>
</dbReference>
<dbReference type="InterPro" id="IPR005478">
    <property type="entry name" value="Transketolase_bac-like"/>
</dbReference>
<dbReference type="InterPro" id="IPR020826">
    <property type="entry name" value="Transketolase_BS"/>
</dbReference>
<dbReference type="InterPro" id="IPR049557">
    <property type="entry name" value="Transketolase_CS"/>
</dbReference>
<dbReference type="InterPro" id="IPR033247">
    <property type="entry name" value="Transketolase_fam"/>
</dbReference>
<dbReference type="InterPro" id="IPR005474">
    <property type="entry name" value="Transketolase_N"/>
</dbReference>
<dbReference type="NCBIfam" id="TIGR00232">
    <property type="entry name" value="tktlase_bact"/>
    <property type="match status" value="1"/>
</dbReference>
<dbReference type="PANTHER" id="PTHR43522">
    <property type="entry name" value="TRANSKETOLASE"/>
    <property type="match status" value="1"/>
</dbReference>
<dbReference type="PANTHER" id="PTHR43522:SF2">
    <property type="entry name" value="TRANSKETOLASE 1-RELATED"/>
    <property type="match status" value="1"/>
</dbReference>
<dbReference type="Pfam" id="PF02779">
    <property type="entry name" value="Transket_pyr"/>
    <property type="match status" value="1"/>
</dbReference>
<dbReference type="Pfam" id="PF22613">
    <property type="entry name" value="Transketolase_C_1"/>
    <property type="match status" value="1"/>
</dbReference>
<dbReference type="Pfam" id="PF00456">
    <property type="entry name" value="Transketolase_N"/>
    <property type="match status" value="1"/>
</dbReference>
<dbReference type="SMART" id="SM00861">
    <property type="entry name" value="Transket_pyr"/>
    <property type="match status" value="1"/>
</dbReference>
<dbReference type="SUPFAM" id="SSF52518">
    <property type="entry name" value="Thiamin diphosphate-binding fold (THDP-binding)"/>
    <property type="match status" value="2"/>
</dbReference>
<dbReference type="SUPFAM" id="SSF52922">
    <property type="entry name" value="TK C-terminal domain-like"/>
    <property type="match status" value="1"/>
</dbReference>
<dbReference type="PROSITE" id="PS00801">
    <property type="entry name" value="TRANSKETOLASE_1"/>
    <property type="match status" value="1"/>
</dbReference>
<dbReference type="PROSITE" id="PS00802">
    <property type="entry name" value="TRANSKETOLASE_2"/>
    <property type="match status" value="1"/>
</dbReference>
<gene>
    <name type="primary">tkt2</name>
    <name type="ordered locus">VV2_0553</name>
</gene>
<evidence type="ECO:0000250" key="1"/>
<evidence type="ECO:0000305" key="2"/>
<organism>
    <name type="scientific">Vibrio vulnificus (strain CMCP6)</name>
    <dbReference type="NCBI Taxonomy" id="216895"/>
    <lineage>
        <taxon>Bacteria</taxon>
        <taxon>Pseudomonadati</taxon>
        <taxon>Pseudomonadota</taxon>
        <taxon>Gammaproteobacteria</taxon>
        <taxon>Vibrionales</taxon>
        <taxon>Vibrionaceae</taxon>
        <taxon>Vibrio</taxon>
    </lineage>
</organism>
<proteinExistence type="inferred from homology"/>